<protein>
    <recommendedName>
        <fullName evidence="1">ATP synthase subunit b</fullName>
    </recommendedName>
    <alternativeName>
        <fullName evidence="1">ATP synthase F(0) sector subunit b</fullName>
    </alternativeName>
    <alternativeName>
        <fullName evidence="1">ATPase subunit I</fullName>
    </alternativeName>
    <alternativeName>
        <fullName evidence="1">F-type ATPase subunit b</fullName>
        <shortName evidence="1">F-ATPase subunit b</shortName>
    </alternativeName>
</protein>
<feature type="chain" id="PRO_0000368704" description="ATP synthase subunit b">
    <location>
        <begin position="1"/>
        <end position="156"/>
    </location>
</feature>
<feature type="transmembrane region" description="Helical" evidence="1">
    <location>
        <begin position="7"/>
        <end position="27"/>
    </location>
</feature>
<proteinExistence type="inferred from homology"/>
<sequence>MNLNATLVAQMVVFFILWWVVAKFIWPPLVKALDERAKKIADGLAAADKGKAELELANKRVDQALTEARNEGAQRIADAEKRAQMTADEIKQNAQAEAARIIAQAKAEAEQQTVRARESLRDQVAVLAVKGAEQILKREVNAQVHADLLNQLKAEL</sequence>
<name>ATPF_RALPJ</name>
<reference key="1">
    <citation type="submission" date="2008-05" db="EMBL/GenBank/DDBJ databases">
        <title>Complete sequence of chromosome 1 of Ralstonia pickettii 12J.</title>
        <authorList>
            <person name="Lucas S."/>
            <person name="Copeland A."/>
            <person name="Lapidus A."/>
            <person name="Glavina del Rio T."/>
            <person name="Dalin E."/>
            <person name="Tice H."/>
            <person name="Bruce D."/>
            <person name="Goodwin L."/>
            <person name="Pitluck S."/>
            <person name="Meincke L."/>
            <person name="Brettin T."/>
            <person name="Detter J.C."/>
            <person name="Han C."/>
            <person name="Kuske C.R."/>
            <person name="Schmutz J."/>
            <person name="Larimer F."/>
            <person name="Land M."/>
            <person name="Hauser L."/>
            <person name="Kyrpides N."/>
            <person name="Mikhailova N."/>
            <person name="Marsh T."/>
            <person name="Richardson P."/>
        </authorList>
    </citation>
    <scope>NUCLEOTIDE SEQUENCE [LARGE SCALE GENOMIC DNA]</scope>
    <source>
        <strain>12J</strain>
    </source>
</reference>
<accession>B2UGV3</accession>
<gene>
    <name evidence="1" type="primary">atpF</name>
    <name type="ordered locus">Rpic_3516</name>
</gene>
<comment type="function">
    <text evidence="1">F(1)F(0) ATP synthase produces ATP from ADP in the presence of a proton or sodium gradient. F-type ATPases consist of two structural domains, F(1) containing the extramembraneous catalytic core and F(0) containing the membrane proton channel, linked together by a central stalk and a peripheral stalk. During catalysis, ATP synthesis in the catalytic domain of F(1) is coupled via a rotary mechanism of the central stalk subunits to proton translocation.</text>
</comment>
<comment type="function">
    <text evidence="1">Component of the F(0) channel, it forms part of the peripheral stalk, linking F(1) to F(0).</text>
</comment>
<comment type="subunit">
    <text evidence="1">F-type ATPases have 2 components, F(1) - the catalytic core - and F(0) - the membrane proton channel. F(1) has five subunits: alpha(3), beta(3), gamma(1), delta(1), epsilon(1). F(0) has three main subunits: a(1), b(2) and c(10-14). The alpha and beta chains form an alternating ring which encloses part of the gamma chain. F(1) is attached to F(0) by a central stalk formed by the gamma and epsilon chains, while a peripheral stalk is formed by the delta and b chains.</text>
</comment>
<comment type="subcellular location">
    <subcellularLocation>
        <location evidence="1">Cell inner membrane</location>
        <topology evidence="1">Single-pass membrane protein</topology>
    </subcellularLocation>
</comment>
<comment type="similarity">
    <text evidence="1">Belongs to the ATPase B chain family.</text>
</comment>
<evidence type="ECO:0000255" key="1">
    <source>
        <dbReference type="HAMAP-Rule" id="MF_01398"/>
    </source>
</evidence>
<organism>
    <name type="scientific">Ralstonia pickettii (strain 12J)</name>
    <dbReference type="NCBI Taxonomy" id="402626"/>
    <lineage>
        <taxon>Bacteria</taxon>
        <taxon>Pseudomonadati</taxon>
        <taxon>Pseudomonadota</taxon>
        <taxon>Betaproteobacteria</taxon>
        <taxon>Burkholderiales</taxon>
        <taxon>Burkholderiaceae</taxon>
        <taxon>Ralstonia</taxon>
    </lineage>
</organism>
<dbReference type="EMBL" id="CP001068">
    <property type="protein sequence ID" value="ACD28636.1"/>
    <property type="molecule type" value="Genomic_DNA"/>
</dbReference>
<dbReference type="SMR" id="B2UGV3"/>
<dbReference type="STRING" id="402626.Rpic_3516"/>
<dbReference type="KEGG" id="rpi:Rpic_3516"/>
<dbReference type="eggNOG" id="COG0711">
    <property type="taxonomic scope" value="Bacteria"/>
</dbReference>
<dbReference type="HOGENOM" id="CLU_079215_4_5_4"/>
<dbReference type="GO" id="GO:0005886">
    <property type="term" value="C:plasma membrane"/>
    <property type="evidence" value="ECO:0007669"/>
    <property type="project" value="UniProtKB-SubCell"/>
</dbReference>
<dbReference type="GO" id="GO:0045259">
    <property type="term" value="C:proton-transporting ATP synthase complex"/>
    <property type="evidence" value="ECO:0007669"/>
    <property type="project" value="UniProtKB-KW"/>
</dbReference>
<dbReference type="GO" id="GO:0046933">
    <property type="term" value="F:proton-transporting ATP synthase activity, rotational mechanism"/>
    <property type="evidence" value="ECO:0007669"/>
    <property type="project" value="UniProtKB-UniRule"/>
</dbReference>
<dbReference type="GO" id="GO:0046961">
    <property type="term" value="F:proton-transporting ATPase activity, rotational mechanism"/>
    <property type="evidence" value="ECO:0007669"/>
    <property type="project" value="TreeGrafter"/>
</dbReference>
<dbReference type="CDD" id="cd06503">
    <property type="entry name" value="ATP-synt_Fo_b"/>
    <property type="match status" value="1"/>
</dbReference>
<dbReference type="Gene3D" id="6.10.250.1580">
    <property type="match status" value="1"/>
</dbReference>
<dbReference type="HAMAP" id="MF_01398">
    <property type="entry name" value="ATP_synth_b_bprime"/>
    <property type="match status" value="1"/>
</dbReference>
<dbReference type="InterPro" id="IPR028987">
    <property type="entry name" value="ATP_synth_B-like_membr_sf"/>
</dbReference>
<dbReference type="InterPro" id="IPR002146">
    <property type="entry name" value="ATP_synth_b/b'su_bac/chlpt"/>
</dbReference>
<dbReference type="InterPro" id="IPR005864">
    <property type="entry name" value="ATP_synth_F0_bsu_bac"/>
</dbReference>
<dbReference type="InterPro" id="IPR050059">
    <property type="entry name" value="ATP_synthase_B_chain"/>
</dbReference>
<dbReference type="NCBIfam" id="TIGR01144">
    <property type="entry name" value="ATP_synt_b"/>
    <property type="match status" value="1"/>
</dbReference>
<dbReference type="NCBIfam" id="NF004411">
    <property type="entry name" value="PRK05759.1-2"/>
    <property type="match status" value="1"/>
</dbReference>
<dbReference type="PANTHER" id="PTHR33445:SF1">
    <property type="entry name" value="ATP SYNTHASE SUBUNIT B"/>
    <property type="match status" value="1"/>
</dbReference>
<dbReference type="PANTHER" id="PTHR33445">
    <property type="entry name" value="ATP SYNTHASE SUBUNIT B', CHLOROPLASTIC"/>
    <property type="match status" value="1"/>
</dbReference>
<dbReference type="Pfam" id="PF00430">
    <property type="entry name" value="ATP-synt_B"/>
    <property type="match status" value="1"/>
</dbReference>
<dbReference type="SUPFAM" id="SSF81573">
    <property type="entry name" value="F1F0 ATP synthase subunit B, membrane domain"/>
    <property type="match status" value="1"/>
</dbReference>
<keyword id="KW-0066">ATP synthesis</keyword>
<keyword id="KW-0997">Cell inner membrane</keyword>
<keyword id="KW-1003">Cell membrane</keyword>
<keyword id="KW-0138">CF(0)</keyword>
<keyword id="KW-0375">Hydrogen ion transport</keyword>
<keyword id="KW-0406">Ion transport</keyword>
<keyword id="KW-0472">Membrane</keyword>
<keyword id="KW-0812">Transmembrane</keyword>
<keyword id="KW-1133">Transmembrane helix</keyword>
<keyword id="KW-0813">Transport</keyword>